<organism>
    <name type="scientific">Salmonella paratyphi C (strain RKS4594)</name>
    <dbReference type="NCBI Taxonomy" id="476213"/>
    <lineage>
        <taxon>Bacteria</taxon>
        <taxon>Pseudomonadati</taxon>
        <taxon>Pseudomonadota</taxon>
        <taxon>Gammaproteobacteria</taxon>
        <taxon>Enterobacterales</taxon>
        <taxon>Enterobacteriaceae</taxon>
        <taxon>Salmonella</taxon>
    </lineage>
</organism>
<comment type="function">
    <text evidence="1">Catalyzes the synthesis of GMP from XMP.</text>
</comment>
<comment type="catalytic activity">
    <reaction evidence="1">
        <text>XMP + L-glutamine + ATP + H2O = GMP + L-glutamate + AMP + diphosphate + 2 H(+)</text>
        <dbReference type="Rhea" id="RHEA:11680"/>
        <dbReference type="ChEBI" id="CHEBI:15377"/>
        <dbReference type="ChEBI" id="CHEBI:15378"/>
        <dbReference type="ChEBI" id="CHEBI:29985"/>
        <dbReference type="ChEBI" id="CHEBI:30616"/>
        <dbReference type="ChEBI" id="CHEBI:33019"/>
        <dbReference type="ChEBI" id="CHEBI:57464"/>
        <dbReference type="ChEBI" id="CHEBI:58115"/>
        <dbReference type="ChEBI" id="CHEBI:58359"/>
        <dbReference type="ChEBI" id="CHEBI:456215"/>
        <dbReference type="EC" id="6.3.5.2"/>
    </reaction>
</comment>
<comment type="pathway">
    <text evidence="1">Purine metabolism; GMP biosynthesis; GMP from XMP (L-Gln route): step 1/1.</text>
</comment>
<comment type="subunit">
    <text evidence="1">Homodimer.</text>
</comment>
<gene>
    <name evidence="1" type="primary">guaA</name>
    <name type="ordered locus">SPC_1145</name>
</gene>
<keyword id="KW-0067">ATP-binding</keyword>
<keyword id="KW-0315">Glutamine amidotransferase</keyword>
<keyword id="KW-0332">GMP biosynthesis</keyword>
<keyword id="KW-0436">Ligase</keyword>
<keyword id="KW-0547">Nucleotide-binding</keyword>
<keyword id="KW-0658">Purine biosynthesis</keyword>
<proteinExistence type="inferred from homology"/>
<accession>C0PYP4</accession>
<feature type="chain" id="PRO_1000133378" description="GMP synthase [glutamine-hydrolyzing]">
    <location>
        <begin position="1"/>
        <end position="525"/>
    </location>
</feature>
<feature type="domain" description="Glutamine amidotransferase type-1" evidence="1">
    <location>
        <begin position="9"/>
        <end position="207"/>
    </location>
</feature>
<feature type="domain" description="GMPS ATP-PPase" evidence="1">
    <location>
        <begin position="208"/>
        <end position="400"/>
    </location>
</feature>
<feature type="active site" description="Nucleophile" evidence="1">
    <location>
        <position position="86"/>
    </location>
</feature>
<feature type="active site" evidence="1">
    <location>
        <position position="181"/>
    </location>
</feature>
<feature type="active site" evidence="1">
    <location>
        <position position="183"/>
    </location>
</feature>
<feature type="binding site" evidence="1">
    <location>
        <begin position="235"/>
        <end position="241"/>
    </location>
    <ligand>
        <name>ATP</name>
        <dbReference type="ChEBI" id="CHEBI:30616"/>
    </ligand>
</feature>
<dbReference type="EC" id="6.3.5.2" evidence="1"/>
<dbReference type="EMBL" id="CP000857">
    <property type="protein sequence ID" value="ACN45311.1"/>
    <property type="molecule type" value="Genomic_DNA"/>
</dbReference>
<dbReference type="RefSeq" id="WP_000138296.1">
    <property type="nucleotide sequence ID" value="NC_012125.1"/>
</dbReference>
<dbReference type="SMR" id="C0PYP4"/>
<dbReference type="MEROPS" id="C26.957"/>
<dbReference type="KEGG" id="sei:SPC_1145"/>
<dbReference type="HOGENOM" id="CLU_014340_0_5_6"/>
<dbReference type="UniPathway" id="UPA00189">
    <property type="reaction ID" value="UER00296"/>
</dbReference>
<dbReference type="Proteomes" id="UP000001599">
    <property type="component" value="Chromosome"/>
</dbReference>
<dbReference type="GO" id="GO:0005829">
    <property type="term" value="C:cytosol"/>
    <property type="evidence" value="ECO:0007669"/>
    <property type="project" value="TreeGrafter"/>
</dbReference>
<dbReference type="GO" id="GO:0005524">
    <property type="term" value="F:ATP binding"/>
    <property type="evidence" value="ECO:0007669"/>
    <property type="project" value="UniProtKB-UniRule"/>
</dbReference>
<dbReference type="GO" id="GO:0003921">
    <property type="term" value="F:GMP synthase activity"/>
    <property type="evidence" value="ECO:0007669"/>
    <property type="project" value="InterPro"/>
</dbReference>
<dbReference type="CDD" id="cd01742">
    <property type="entry name" value="GATase1_GMP_Synthase"/>
    <property type="match status" value="1"/>
</dbReference>
<dbReference type="CDD" id="cd01997">
    <property type="entry name" value="GMP_synthase_C"/>
    <property type="match status" value="1"/>
</dbReference>
<dbReference type="FunFam" id="3.30.300.10:FF:000002">
    <property type="entry name" value="GMP synthase [glutamine-hydrolyzing]"/>
    <property type="match status" value="1"/>
</dbReference>
<dbReference type="FunFam" id="3.40.50.620:FF:000001">
    <property type="entry name" value="GMP synthase [glutamine-hydrolyzing]"/>
    <property type="match status" value="1"/>
</dbReference>
<dbReference type="FunFam" id="3.40.50.880:FF:000001">
    <property type="entry name" value="GMP synthase [glutamine-hydrolyzing]"/>
    <property type="match status" value="1"/>
</dbReference>
<dbReference type="Gene3D" id="3.30.300.10">
    <property type="match status" value="1"/>
</dbReference>
<dbReference type="Gene3D" id="3.40.50.880">
    <property type="match status" value="1"/>
</dbReference>
<dbReference type="Gene3D" id="3.40.50.620">
    <property type="entry name" value="HUPs"/>
    <property type="match status" value="1"/>
</dbReference>
<dbReference type="HAMAP" id="MF_00344">
    <property type="entry name" value="GMP_synthase"/>
    <property type="match status" value="1"/>
</dbReference>
<dbReference type="InterPro" id="IPR029062">
    <property type="entry name" value="Class_I_gatase-like"/>
</dbReference>
<dbReference type="InterPro" id="IPR017926">
    <property type="entry name" value="GATASE"/>
</dbReference>
<dbReference type="InterPro" id="IPR001674">
    <property type="entry name" value="GMP_synth_C"/>
</dbReference>
<dbReference type="InterPro" id="IPR004739">
    <property type="entry name" value="GMP_synth_GATase"/>
</dbReference>
<dbReference type="InterPro" id="IPR022955">
    <property type="entry name" value="GMP_synthase"/>
</dbReference>
<dbReference type="InterPro" id="IPR025777">
    <property type="entry name" value="GMPS_ATP_PPase_dom"/>
</dbReference>
<dbReference type="InterPro" id="IPR022310">
    <property type="entry name" value="NAD/GMP_synthase"/>
</dbReference>
<dbReference type="InterPro" id="IPR014729">
    <property type="entry name" value="Rossmann-like_a/b/a_fold"/>
</dbReference>
<dbReference type="NCBIfam" id="TIGR00884">
    <property type="entry name" value="guaA_Cterm"/>
    <property type="match status" value="1"/>
</dbReference>
<dbReference type="NCBIfam" id="TIGR00888">
    <property type="entry name" value="guaA_Nterm"/>
    <property type="match status" value="1"/>
</dbReference>
<dbReference type="NCBIfam" id="NF000848">
    <property type="entry name" value="PRK00074.1"/>
    <property type="match status" value="1"/>
</dbReference>
<dbReference type="PANTHER" id="PTHR11922:SF2">
    <property type="entry name" value="GMP SYNTHASE [GLUTAMINE-HYDROLYZING]"/>
    <property type="match status" value="1"/>
</dbReference>
<dbReference type="PANTHER" id="PTHR11922">
    <property type="entry name" value="GMP SYNTHASE-RELATED"/>
    <property type="match status" value="1"/>
</dbReference>
<dbReference type="Pfam" id="PF00117">
    <property type="entry name" value="GATase"/>
    <property type="match status" value="1"/>
</dbReference>
<dbReference type="Pfam" id="PF00958">
    <property type="entry name" value="GMP_synt_C"/>
    <property type="match status" value="1"/>
</dbReference>
<dbReference type="Pfam" id="PF02540">
    <property type="entry name" value="NAD_synthase"/>
    <property type="match status" value="1"/>
</dbReference>
<dbReference type="PRINTS" id="PR00097">
    <property type="entry name" value="ANTSNTHASEII"/>
</dbReference>
<dbReference type="PRINTS" id="PR00099">
    <property type="entry name" value="CPSGATASE"/>
</dbReference>
<dbReference type="PRINTS" id="PR00096">
    <property type="entry name" value="GATASE"/>
</dbReference>
<dbReference type="SUPFAM" id="SSF52402">
    <property type="entry name" value="Adenine nucleotide alpha hydrolases-like"/>
    <property type="match status" value="1"/>
</dbReference>
<dbReference type="SUPFAM" id="SSF52317">
    <property type="entry name" value="Class I glutamine amidotransferase-like"/>
    <property type="match status" value="1"/>
</dbReference>
<dbReference type="SUPFAM" id="SSF54810">
    <property type="entry name" value="GMP synthetase C-terminal dimerisation domain"/>
    <property type="match status" value="1"/>
</dbReference>
<dbReference type="PROSITE" id="PS51273">
    <property type="entry name" value="GATASE_TYPE_1"/>
    <property type="match status" value="1"/>
</dbReference>
<dbReference type="PROSITE" id="PS51553">
    <property type="entry name" value="GMPS_ATP_PPASE"/>
    <property type="match status" value="1"/>
</dbReference>
<protein>
    <recommendedName>
        <fullName evidence="1">GMP synthase [glutamine-hydrolyzing]</fullName>
        <ecNumber evidence="1">6.3.5.2</ecNumber>
    </recommendedName>
    <alternativeName>
        <fullName evidence="1">GMP synthetase</fullName>
    </alternativeName>
    <alternativeName>
        <fullName evidence="1">Glutamine amidotransferase</fullName>
    </alternativeName>
</protein>
<name>GUAA_SALPC</name>
<reference key="1">
    <citation type="journal article" date="2009" name="PLoS ONE">
        <title>Salmonella paratyphi C: genetic divergence from Salmonella choleraesuis and pathogenic convergence with Salmonella typhi.</title>
        <authorList>
            <person name="Liu W.-Q."/>
            <person name="Feng Y."/>
            <person name="Wang Y."/>
            <person name="Zou Q.-H."/>
            <person name="Chen F."/>
            <person name="Guo J.-T."/>
            <person name="Peng Y.-H."/>
            <person name="Jin Y."/>
            <person name="Li Y.-G."/>
            <person name="Hu S.-N."/>
            <person name="Johnston R.N."/>
            <person name="Liu G.-R."/>
            <person name="Liu S.-L."/>
        </authorList>
    </citation>
    <scope>NUCLEOTIDE SEQUENCE [LARGE SCALE GENOMIC DNA]</scope>
    <source>
        <strain>RKS4594</strain>
    </source>
</reference>
<sequence length="525" mass="58700">MTENIHKHRILILDFGSQYTQLVARRVRELGVYCELWAWDVTEAQIRDFNPSGIILSGGPESTTEENSPRAPQYVFEAGVPVFGVCYGMQTMAMQLGGHVEGSNEREFGYAQVEVLTDSALVRGIEDSLTADGKPLLDVWMSHGDKVTAIPSDFVTVASTESCPFAIMANEEKRFYGVQFHPEVTHTRQGMRMLERFVRDICQCEALWTPAKIIDDAVARIREQVGDDKVILGLSGGVDSSVTAMLLHRAIGKNLTCVFVDNGLLRLNEAEQVMDMFGDHFGLNIVHVPAEERFLSALAGENDPEAKRKIIGRVFVEVFDEEALKLEDVKWLAQGTIYPDVIESAASATGKAHVIKSHHNVGGLPKEMKMGLVEPLKELFKDEVRKIGLELGLPYDMLYRHPFPGPGLGVRVLGEVKKEYCDLLRRADAIFIEELRKADLYDKVSQAFTVFLPVRSVGVMGDGRKYDWVVSLRAVETIDFMTAHWAHLPYDFLGRVSNRIINEVNGISRVVYDISGKPPATIEWE</sequence>
<evidence type="ECO:0000255" key="1">
    <source>
        <dbReference type="HAMAP-Rule" id="MF_00344"/>
    </source>
</evidence>